<proteinExistence type="inferred from homology"/>
<protein>
    <recommendedName>
        <fullName evidence="1">3-deoxy-manno-octulosonate cytidylyltransferase</fullName>
        <ecNumber evidence="1">2.7.7.38</ecNumber>
    </recommendedName>
    <alternativeName>
        <fullName evidence="1">CMP-2-keto-3-deoxyoctulosonic acid synthase</fullName>
        <shortName evidence="1">CKS</shortName>
        <shortName evidence="1">CMP-KDO synthase</shortName>
    </alternativeName>
</protein>
<keyword id="KW-0963">Cytoplasm</keyword>
<keyword id="KW-0448">Lipopolysaccharide biosynthesis</keyword>
<keyword id="KW-0548">Nucleotidyltransferase</keyword>
<keyword id="KW-1185">Reference proteome</keyword>
<keyword id="KW-0808">Transferase</keyword>
<accession>Q129C7</accession>
<sequence>MRFTVLIPARLASTRLPNKPLADMGGAPMVVRVAQRAMQSTAARTVVATDSTDIIDKCAAFGVAAVLTRADHPSGSDRLAEACTALGLADDDIVVNVQGDEPLIDPALIDAVARLLNERPDCAMSTAAHSIDQMADLLNPNVVKVVLDARQTALYFSRSPIPAARDFAGKPWWEDGEKGCKLPKPLRHVGIYGYRVGFLRQFPTLPQAPLEQLESLEQLRALWHGHRIAVHITDEAPGPGVDTPEDLARARQFFP</sequence>
<comment type="function">
    <text evidence="1">Activates KDO (a required 8-carbon sugar) for incorporation into bacterial lipopolysaccharide in Gram-negative bacteria.</text>
</comment>
<comment type="catalytic activity">
    <reaction evidence="1">
        <text>3-deoxy-alpha-D-manno-oct-2-ulosonate + CTP = CMP-3-deoxy-beta-D-manno-octulosonate + diphosphate</text>
        <dbReference type="Rhea" id="RHEA:23448"/>
        <dbReference type="ChEBI" id="CHEBI:33019"/>
        <dbReference type="ChEBI" id="CHEBI:37563"/>
        <dbReference type="ChEBI" id="CHEBI:85986"/>
        <dbReference type="ChEBI" id="CHEBI:85987"/>
        <dbReference type="EC" id="2.7.7.38"/>
    </reaction>
</comment>
<comment type="pathway">
    <text evidence="1">Nucleotide-sugar biosynthesis; CMP-3-deoxy-D-manno-octulosonate biosynthesis; CMP-3-deoxy-D-manno-octulosonate from 3-deoxy-D-manno-octulosonate and CTP: step 1/1.</text>
</comment>
<comment type="pathway">
    <text evidence="1">Bacterial outer membrane biogenesis; lipopolysaccharide biosynthesis.</text>
</comment>
<comment type="subcellular location">
    <subcellularLocation>
        <location evidence="1">Cytoplasm</location>
    </subcellularLocation>
</comment>
<comment type="similarity">
    <text evidence="1">Belongs to the KdsB family.</text>
</comment>
<comment type="sequence caution" evidence="2">
    <conflict type="erroneous initiation">
        <sequence resource="EMBL-CDS" id="ABE44865"/>
    </conflict>
</comment>
<evidence type="ECO:0000255" key="1">
    <source>
        <dbReference type="HAMAP-Rule" id="MF_00057"/>
    </source>
</evidence>
<evidence type="ECO:0000305" key="2"/>
<dbReference type="EC" id="2.7.7.38" evidence="1"/>
<dbReference type="EMBL" id="CP000316">
    <property type="protein sequence ID" value="ABE44865.1"/>
    <property type="status" value="ALT_INIT"/>
    <property type="molecule type" value="Genomic_DNA"/>
</dbReference>
<dbReference type="RefSeq" id="WP_041389857.1">
    <property type="nucleotide sequence ID" value="NC_007948.1"/>
</dbReference>
<dbReference type="SMR" id="Q129C7"/>
<dbReference type="STRING" id="296591.Bpro_2951"/>
<dbReference type="KEGG" id="pol:Bpro_2951"/>
<dbReference type="eggNOG" id="COG1212">
    <property type="taxonomic scope" value="Bacteria"/>
</dbReference>
<dbReference type="HOGENOM" id="CLU_065038_1_0_4"/>
<dbReference type="OrthoDB" id="9815559at2"/>
<dbReference type="UniPathway" id="UPA00030"/>
<dbReference type="UniPathway" id="UPA00358">
    <property type="reaction ID" value="UER00476"/>
</dbReference>
<dbReference type="Proteomes" id="UP000001983">
    <property type="component" value="Chromosome"/>
</dbReference>
<dbReference type="GO" id="GO:0005829">
    <property type="term" value="C:cytosol"/>
    <property type="evidence" value="ECO:0007669"/>
    <property type="project" value="TreeGrafter"/>
</dbReference>
<dbReference type="GO" id="GO:0008690">
    <property type="term" value="F:3-deoxy-manno-octulosonate cytidylyltransferase activity"/>
    <property type="evidence" value="ECO:0007669"/>
    <property type="project" value="UniProtKB-UniRule"/>
</dbReference>
<dbReference type="GO" id="GO:0033468">
    <property type="term" value="P:CMP-keto-3-deoxy-D-manno-octulosonic acid biosynthetic process"/>
    <property type="evidence" value="ECO:0007669"/>
    <property type="project" value="UniProtKB-UniRule"/>
</dbReference>
<dbReference type="GO" id="GO:0009103">
    <property type="term" value="P:lipopolysaccharide biosynthetic process"/>
    <property type="evidence" value="ECO:0007669"/>
    <property type="project" value="UniProtKB-UniRule"/>
</dbReference>
<dbReference type="CDD" id="cd02517">
    <property type="entry name" value="CMP-KDO-Synthetase"/>
    <property type="match status" value="1"/>
</dbReference>
<dbReference type="FunFam" id="3.90.550.10:FF:000011">
    <property type="entry name" value="3-deoxy-manno-octulosonate cytidylyltransferase"/>
    <property type="match status" value="1"/>
</dbReference>
<dbReference type="Gene3D" id="3.90.550.10">
    <property type="entry name" value="Spore Coat Polysaccharide Biosynthesis Protein SpsA, Chain A"/>
    <property type="match status" value="1"/>
</dbReference>
<dbReference type="HAMAP" id="MF_00057">
    <property type="entry name" value="KdsB"/>
    <property type="match status" value="1"/>
</dbReference>
<dbReference type="InterPro" id="IPR003329">
    <property type="entry name" value="Cytidylyl_trans"/>
</dbReference>
<dbReference type="InterPro" id="IPR004528">
    <property type="entry name" value="KdsB"/>
</dbReference>
<dbReference type="InterPro" id="IPR029044">
    <property type="entry name" value="Nucleotide-diphossugar_trans"/>
</dbReference>
<dbReference type="NCBIfam" id="TIGR00466">
    <property type="entry name" value="kdsB"/>
    <property type="match status" value="1"/>
</dbReference>
<dbReference type="NCBIfam" id="NF003952">
    <property type="entry name" value="PRK05450.1-5"/>
    <property type="match status" value="1"/>
</dbReference>
<dbReference type="NCBIfam" id="NF009905">
    <property type="entry name" value="PRK13368.1"/>
    <property type="match status" value="1"/>
</dbReference>
<dbReference type="PANTHER" id="PTHR42866">
    <property type="entry name" value="3-DEOXY-MANNO-OCTULOSONATE CYTIDYLYLTRANSFERASE"/>
    <property type="match status" value="1"/>
</dbReference>
<dbReference type="PANTHER" id="PTHR42866:SF2">
    <property type="entry name" value="3-DEOXY-MANNO-OCTULOSONATE CYTIDYLYLTRANSFERASE, MITOCHONDRIAL"/>
    <property type="match status" value="1"/>
</dbReference>
<dbReference type="Pfam" id="PF02348">
    <property type="entry name" value="CTP_transf_3"/>
    <property type="match status" value="1"/>
</dbReference>
<dbReference type="SUPFAM" id="SSF53448">
    <property type="entry name" value="Nucleotide-diphospho-sugar transferases"/>
    <property type="match status" value="1"/>
</dbReference>
<gene>
    <name evidence="1" type="primary">kdsB</name>
    <name type="ordered locus">Bpro_2951</name>
</gene>
<name>KDSB_POLSJ</name>
<reference key="1">
    <citation type="journal article" date="2008" name="Appl. Environ. Microbiol.">
        <title>The genome of Polaromonas sp. strain JS666: insights into the evolution of a hydrocarbon- and xenobiotic-degrading bacterium, and features of relevance to biotechnology.</title>
        <authorList>
            <person name="Mattes T.E."/>
            <person name="Alexander A.K."/>
            <person name="Richardson P.M."/>
            <person name="Munk A.C."/>
            <person name="Han C.S."/>
            <person name="Stothard P."/>
            <person name="Coleman N.V."/>
        </authorList>
    </citation>
    <scope>NUCLEOTIDE SEQUENCE [LARGE SCALE GENOMIC DNA]</scope>
    <source>
        <strain>JS666 / ATCC BAA-500</strain>
    </source>
</reference>
<feature type="chain" id="PRO_0000370115" description="3-deoxy-manno-octulosonate cytidylyltransferase">
    <location>
        <begin position="1"/>
        <end position="255"/>
    </location>
</feature>
<organism>
    <name type="scientific">Polaromonas sp. (strain JS666 / ATCC BAA-500)</name>
    <dbReference type="NCBI Taxonomy" id="296591"/>
    <lineage>
        <taxon>Bacteria</taxon>
        <taxon>Pseudomonadati</taxon>
        <taxon>Pseudomonadota</taxon>
        <taxon>Betaproteobacteria</taxon>
        <taxon>Burkholderiales</taxon>
        <taxon>Comamonadaceae</taxon>
        <taxon>Polaromonas</taxon>
    </lineage>
</organism>